<proteinExistence type="evidence at protein level"/>
<sequence>ASYKIHLVNKDQGIDETIECPDDQYILDAAEEQGLDLPYSCRAGACSTCAGKLLEGEVDQSDQSFLDDDQVKAGFVLTCVAYPTSNATILTHQEESLY</sequence>
<organism>
    <name type="scientific">Cyanidium caldarium</name>
    <name type="common">Red alga</name>
    <dbReference type="NCBI Taxonomy" id="2771"/>
    <lineage>
        <taxon>Eukaryota</taxon>
        <taxon>Rhodophyta</taxon>
        <taxon>Bangiophyceae</taxon>
        <taxon>Cyanidiales</taxon>
        <taxon>Cyanidiaceae</taxon>
        <taxon>Cyanidium</taxon>
    </lineage>
</organism>
<dbReference type="PIR" id="A00245">
    <property type="entry name" value="FEKK"/>
</dbReference>
<dbReference type="SMR" id="P00241"/>
<dbReference type="GO" id="GO:0009507">
    <property type="term" value="C:chloroplast"/>
    <property type="evidence" value="ECO:0007669"/>
    <property type="project" value="UniProtKB-SubCell"/>
</dbReference>
<dbReference type="GO" id="GO:0051537">
    <property type="term" value="F:2 iron, 2 sulfur cluster binding"/>
    <property type="evidence" value="ECO:0007669"/>
    <property type="project" value="UniProtKB-KW"/>
</dbReference>
<dbReference type="GO" id="GO:0009055">
    <property type="term" value="F:electron transfer activity"/>
    <property type="evidence" value="ECO:0007669"/>
    <property type="project" value="InterPro"/>
</dbReference>
<dbReference type="GO" id="GO:0046872">
    <property type="term" value="F:metal ion binding"/>
    <property type="evidence" value="ECO:0007669"/>
    <property type="project" value="UniProtKB-KW"/>
</dbReference>
<dbReference type="GO" id="GO:0022900">
    <property type="term" value="P:electron transport chain"/>
    <property type="evidence" value="ECO:0007669"/>
    <property type="project" value="InterPro"/>
</dbReference>
<dbReference type="CDD" id="cd00207">
    <property type="entry name" value="fer2"/>
    <property type="match status" value="1"/>
</dbReference>
<dbReference type="FunFam" id="3.10.20.30:FF:000014">
    <property type="entry name" value="Ferredoxin"/>
    <property type="match status" value="1"/>
</dbReference>
<dbReference type="Gene3D" id="3.10.20.30">
    <property type="match status" value="1"/>
</dbReference>
<dbReference type="InterPro" id="IPR036010">
    <property type="entry name" value="2Fe-2S_ferredoxin-like_sf"/>
</dbReference>
<dbReference type="InterPro" id="IPR001041">
    <property type="entry name" value="2Fe-2S_ferredoxin-type"/>
</dbReference>
<dbReference type="InterPro" id="IPR006058">
    <property type="entry name" value="2Fe2S_fd_BS"/>
</dbReference>
<dbReference type="InterPro" id="IPR012675">
    <property type="entry name" value="Beta-grasp_dom_sf"/>
</dbReference>
<dbReference type="InterPro" id="IPR010241">
    <property type="entry name" value="Fd_pln"/>
</dbReference>
<dbReference type="NCBIfam" id="TIGR02008">
    <property type="entry name" value="fdx_plant"/>
    <property type="match status" value="1"/>
</dbReference>
<dbReference type="PANTHER" id="PTHR43112">
    <property type="entry name" value="FERREDOXIN"/>
    <property type="match status" value="1"/>
</dbReference>
<dbReference type="PANTHER" id="PTHR43112:SF3">
    <property type="entry name" value="FERREDOXIN-2, CHLOROPLASTIC"/>
    <property type="match status" value="1"/>
</dbReference>
<dbReference type="Pfam" id="PF00111">
    <property type="entry name" value="Fer2"/>
    <property type="match status" value="1"/>
</dbReference>
<dbReference type="SUPFAM" id="SSF54292">
    <property type="entry name" value="2Fe-2S ferredoxin-like"/>
    <property type="match status" value="1"/>
</dbReference>
<dbReference type="PROSITE" id="PS00197">
    <property type="entry name" value="2FE2S_FER_1"/>
    <property type="match status" value="1"/>
</dbReference>
<dbReference type="PROSITE" id="PS51085">
    <property type="entry name" value="2FE2S_FER_2"/>
    <property type="match status" value="1"/>
</dbReference>
<accession>P00241</accession>
<protein>
    <recommendedName>
        <fullName>Ferredoxin</fullName>
    </recommendedName>
</protein>
<reference key="1">
    <citation type="journal article" date="1978" name="FEBS Lett.">
        <title>Cyanidium caldarium ferredoxin: a red algal type?</title>
        <authorList>
            <person name="Hase T."/>
            <person name="Wakabayashi S."/>
            <person name="Wada K."/>
            <person name="Matsubara H."/>
            <person name="Juttner F."/>
            <person name="Rao K.K."/>
            <person name="Fry I."/>
            <person name="Hall D.O."/>
        </authorList>
    </citation>
    <scope>PROTEIN SEQUENCE</scope>
    <source>
        <strain>1355/1 type M</strain>
    </source>
</reference>
<keyword id="KW-0001">2Fe-2S</keyword>
<keyword id="KW-0150">Chloroplast</keyword>
<keyword id="KW-0903">Direct protein sequencing</keyword>
<keyword id="KW-0249">Electron transport</keyword>
<keyword id="KW-0408">Iron</keyword>
<keyword id="KW-0411">Iron-sulfur</keyword>
<keyword id="KW-0479">Metal-binding</keyword>
<keyword id="KW-0934">Plastid</keyword>
<keyword id="KW-0813">Transport</keyword>
<evidence type="ECO:0000250" key="1"/>
<evidence type="ECO:0000255" key="2">
    <source>
        <dbReference type="PROSITE-ProRule" id="PRU00465"/>
    </source>
</evidence>
<evidence type="ECO:0000305" key="3"/>
<feature type="chain" id="PRO_0000189318" description="Ferredoxin">
    <location>
        <begin position="1"/>
        <end position="98"/>
    </location>
</feature>
<feature type="domain" description="2Fe-2S ferredoxin-type" evidence="2">
    <location>
        <begin position="3"/>
        <end position="95"/>
    </location>
</feature>
<feature type="binding site" evidence="2">
    <location>
        <position position="41"/>
    </location>
    <ligand>
        <name>[2Fe-2S] cluster</name>
        <dbReference type="ChEBI" id="CHEBI:190135"/>
    </ligand>
</feature>
<feature type="binding site" evidence="2">
    <location>
        <position position="46"/>
    </location>
    <ligand>
        <name>[2Fe-2S] cluster</name>
        <dbReference type="ChEBI" id="CHEBI:190135"/>
    </ligand>
</feature>
<feature type="binding site" evidence="2">
    <location>
        <position position="49"/>
    </location>
    <ligand>
        <name>[2Fe-2S] cluster</name>
        <dbReference type="ChEBI" id="CHEBI:190135"/>
    </ligand>
</feature>
<feature type="binding site" evidence="2">
    <location>
        <position position="79"/>
    </location>
    <ligand>
        <name>[2Fe-2S] cluster</name>
        <dbReference type="ChEBI" id="CHEBI:190135"/>
    </ligand>
</feature>
<comment type="function">
    <text>Ferredoxins are iron-sulfur proteins that transfer electrons in a wide variety of metabolic reactions.</text>
</comment>
<comment type="cofactor">
    <cofactor>
        <name>[2Fe-2S] cluster</name>
        <dbReference type="ChEBI" id="CHEBI:190135"/>
    </cofactor>
    <text>Binds 1 [2Fe-2S] cluster.</text>
</comment>
<comment type="subunit">
    <text evidence="1">Forms a complex with heterodimeric ferredoxin-thioredoxin reductase (FTR) and thioredoxin.</text>
</comment>
<comment type="subcellular location">
    <subcellularLocation>
        <location>Plastid</location>
        <location>Chloroplast</location>
    </subcellularLocation>
</comment>
<comment type="similarity">
    <text evidence="3">Belongs to the 2Fe2S plant-type ferredoxin family.</text>
</comment>
<gene>
    <name type="primary">PETF</name>
</gene>
<name>FER3_CYACA</name>